<gene>
    <name type="primary">hisA</name>
</gene>
<feature type="chain" id="PRO_0000142098" description="1-(5-phosphoribosyl)-5-[(5-phosphoribosylamino)methylideneamino] imidazole-4-carboxamide isomerase">
    <location>
        <begin position="1"/>
        <end position="238"/>
    </location>
</feature>
<feature type="active site" description="Proton acceptor" evidence="1">
    <location>
        <position position="8"/>
    </location>
</feature>
<feature type="active site" description="Proton donor" evidence="1">
    <location>
        <position position="130"/>
    </location>
</feature>
<feature type="sequence conflict" description="In Ref. 2; CAA30300." evidence="2" ref="2">
    <original>H</original>
    <variation>Q</variation>
    <location>
        <position position="26"/>
    </location>
</feature>
<name>HIS4_METVA</name>
<proteinExistence type="inferred from homology"/>
<keyword id="KW-0028">Amino-acid biosynthesis</keyword>
<keyword id="KW-0963">Cytoplasm</keyword>
<keyword id="KW-0368">Histidine biosynthesis</keyword>
<keyword id="KW-0413">Isomerase</keyword>
<sequence>MLIIPAVDMKNKKCVQLIQGNPDKKHVELDNPPEIAKKWVEQGAEMLHLVNLDGAINGKRVNDEFIEETIKNSGVPVQIGGGIRSVSDALYFIEKGAEKVILGTVAIQNPKIVREISSIVGKEKVTVALDAKDGKVLIKGWTEKTDYSPVQIGKILENMGAGSILFTNVDSEGLLEGINVLPTKELVDNLNIPIIASGGVTTVEDLLKFKEIGVYAVVVGSALYKDMINLKDAILASK</sequence>
<protein>
    <recommendedName>
        <fullName>1-(5-phosphoribosyl)-5-[(5-phosphoribosylamino)methylideneamino] imidazole-4-carboxamide isomerase</fullName>
        <ecNumber>5.3.1.16</ecNumber>
    </recommendedName>
    <alternativeName>
        <fullName>Phosphoribosylformimino-5-aminoimidazole carboxamide ribotide isomerase</fullName>
    </alternativeName>
</protein>
<accession>P05324</accession>
<dbReference type="EC" id="5.3.1.16"/>
<dbReference type="EMBL" id="M11219">
    <property type="protein sequence ID" value="AAA72490.1"/>
    <property type="molecule type" value="Genomic_DNA"/>
</dbReference>
<dbReference type="EMBL" id="X07391">
    <property type="protein sequence ID" value="CAA30300.1"/>
    <property type="molecule type" value="Genomic_DNA"/>
</dbReference>
<dbReference type="PIR" id="S00580">
    <property type="entry name" value="S00580"/>
</dbReference>
<dbReference type="PIR" id="T48888">
    <property type="entry name" value="T48888"/>
</dbReference>
<dbReference type="SMR" id="P05324"/>
<dbReference type="UniPathway" id="UPA00031">
    <property type="reaction ID" value="UER00009"/>
</dbReference>
<dbReference type="GO" id="GO:0005737">
    <property type="term" value="C:cytoplasm"/>
    <property type="evidence" value="ECO:0007669"/>
    <property type="project" value="UniProtKB-SubCell"/>
</dbReference>
<dbReference type="GO" id="GO:0003949">
    <property type="term" value="F:1-(5-phosphoribosyl)-5-[(5-phosphoribosylamino)methylideneamino]imidazole-4-carboxamide isomerase activity"/>
    <property type="evidence" value="ECO:0007669"/>
    <property type="project" value="UniProtKB-UniRule"/>
</dbReference>
<dbReference type="GO" id="GO:0000105">
    <property type="term" value="P:L-histidine biosynthetic process"/>
    <property type="evidence" value="ECO:0007669"/>
    <property type="project" value="UniProtKB-UniRule"/>
</dbReference>
<dbReference type="GO" id="GO:0000162">
    <property type="term" value="P:L-tryptophan biosynthetic process"/>
    <property type="evidence" value="ECO:0007669"/>
    <property type="project" value="TreeGrafter"/>
</dbReference>
<dbReference type="CDD" id="cd04732">
    <property type="entry name" value="HisA"/>
    <property type="match status" value="1"/>
</dbReference>
<dbReference type="FunFam" id="3.20.20.70:FF:000009">
    <property type="entry name" value="1-(5-phosphoribosyl)-5-[(5-phosphoribosylamino)methylideneamino] imidazole-4-carboxamide isomerase"/>
    <property type="match status" value="1"/>
</dbReference>
<dbReference type="Gene3D" id="3.20.20.70">
    <property type="entry name" value="Aldolase class I"/>
    <property type="match status" value="1"/>
</dbReference>
<dbReference type="HAMAP" id="MF_01014">
    <property type="entry name" value="HisA"/>
    <property type="match status" value="1"/>
</dbReference>
<dbReference type="InterPro" id="IPR013785">
    <property type="entry name" value="Aldolase_TIM"/>
</dbReference>
<dbReference type="InterPro" id="IPR006062">
    <property type="entry name" value="His_biosynth"/>
</dbReference>
<dbReference type="InterPro" id="IPR006063">
    <property type="entry name" value="HisA_bact_arch"/>
</dbReference>
<dbReference type="InterPro" id="IPR044524">
    <property type="entry name" value="Isoase_HisA-like"/>
</dbReference>
<dbReference type="InterPro" id="IPR023016">
    <property type="entry name" value="Isoase_HisA-like_bact"/>
</dbReference>
<dbReference type="InterPro" id="IPR011060">
    <property type="entry name" value="RibuloseP-bd_barrel"/>
</dbReference>
<dbReference type="NCBIfam" id="TIGR00007">
    <property type="entry name" value="1-(5-phosphoribosyl)-5-[(5-phosphoribosylamino)methylideneamino]imidazole-4-carboxamide isomerase"/>
    <property type="match status" value="1"/>
</dbReference>
<dbReference type="NCBIfam" id="NF010112">
    <property type="entry name" value="PRK13585.1"/>
    <property type="match status" value="1"/>
</dbReference>
<dbReference type="PANTHER" id="PTHR43090">
    <property type="entry name" value="1-(5-PHOSPHORIBOSYL)-5-[(5-PHOSPHORIBOSYLAMINO)METHYLIDENEAMINO] IMIDAZOLE-4-CARBOXAMIDE ISOMERASE"/>
    <property type="match status" value="1"/>
</dbReference>
<dbReference type="PANTHER" id="PTHR43090:SF7">
    <property type="entry name" value="1-(5-PHOSPHORIBOSYL)-5-[(5-PHOSPHORIBOSYLAMINO)METHYLIDENEAMINO] IMIDAZOLE-4-CARBOXAMIDE ISOMERASE"/>
    <property type="match status" value="1"/>
</dbReference>
<dbReference type="Pfam" id="PF00977">
    <property type="entry name" value="His_biosynth"/>
    <property type="match status" value="1"/>
</dbReference>
<dbReference type="SUPFAM" id="SSF51366">
    <property type="entry name" value="Ribulose-phoshate binding barrel"/>
    <property type="match status" value="1"/>
</dbReference>
<organism>
    <name type="scientific">Methanococcus vannielii</name>
    <dbReference type="NCBI Taxonomy" id="2187"/>
    <lineage>
        <taxon>Archaea</taxon>
        <taxon>Methanobacteriati</taxon>
        <taxon>Methanobacteriota</taxon>
        <taxon>Methanomada group</taxon>
        <taxon>Methanococci</taxon>
        <taxon>Methanococcales</taxon>
        <taxon>Methanococcaceae</taxon>
        <taxon>Methanococcus</taxon>
    </lineage>
</organism>
<evidence type="ECO:0000250" key="1"/>
<evidence type="ECO:0000305" key="2"/>
<comment type="catalytic activity">
    <reaction>
        <text>1-(5-phospho-beta-D-ribosyl)-5-[(5-phospho-beta-D-ribosylamino)methylideneamino]imidazole-4-carboxamide = 5-[(5-phospho-1-deoxy-D-ribulos-1-ylimino)methylamino]-1-(5-phospho-beta-D-ribosyl)imidazole-4-carboxamide</text>
        <dbReference type="Rhea" id="RHEA:15469"/>
        <dbReference type="ChEBI" id="CHEBI:58435"/>
        <dbReference type="ChEBI" id="CHEBI:58525"/>
        <dbReference type="EC" id="5.3.1.16"/>
    </reaction>
</comment>
<comment type="pathway">
    <text>Amino-acid biosynthesis; L-histidine biosynthesis; L-histidine from 5-phospho-alpha-D-ribose 1-diphosphate: step 4/9.</text>
</comment>
<comment type="subcellular location">
    <subcellularLocation>
        <location evidence="1">Cytoplasm</location>
    </subcellularLocation>
</comment>
<comment type="similarity">
    <text evidence="2">Belongs to the HisA/HisF family.</text>
</comment>
<reference key="1">
    <citation type="journal article" date="1985" name="Proc. Natl. Acad. Sci. U.S.A.">
        <title>Structure and sequence divergence of two archaebacterial genes.</title>
        <authorList>
            <person name="Cue D."/>
            <person name="Beckler G.S."/>
            <person name="Reeve J.N."/>
            <person name="Konisky J."/>
        </authorList>
    </citation>
    <scope>NUCLEOTIDE SEQUENCE [GENOMIC DNA]</scope>
</reference>
<reference key="2">
    <citation type="journal article" date="1988" name="Nucleic Acids Res.">
        <title>An archaebacterial RNA polymerase binding site and transcription initiation of the hisA gene in Methanococcus vannielii.</title>
        <authorList>
            <person name="Brown J.W."/>
            <person name="Thomm M."/>
            <person name="Beckler G.S."/>
            <person name="Frey G."/>
            <person name="Stetter K.O."/>
            <person name="Reeve J.N."/>
        </authorList>
    </citation>
    <scope>NUCLEOTIDE SEQUENCE [GENOMIC DNA] OF 1-52</scope>
</reference>